<sequence>MGMTIAEKILAAHAGKKEVTPGEIINAKVDIVLANDITAPIAIKEFEKLGVKDVFDRERIALVPDHFTPQKDIKAAEQCKMLREFAQKYKIKHYFEIGRVGIEHALLPEEGIVLPGDLVIGADSHTCTYGALGAFATGVGSTDAAIAMATGECWFKVPETIKFIYYGKLQKWVSGKDLILYTIGDIGVDGASYMAMEFIGEVIDNMPMSGRFSMCNMAIEAGAKAGIIVPDKITEEYVKLRAKRPYKIYNSDQDAKYFEIKEYDCSRIPPVVACPHLPSNVKPANELSHIKIDQVVIGSCTNGRLEDLREAAMVLKGRKVHPEVRMIIIPATQKIYMQALKEGLIEIFIDAQAVVSPPTCGPCLGGHMGILAKGERAIATTNRNFVGRMGHPESEVYLSNPAVAAASGVLGRIGTPEELGL</sequence>
<name>LEUC_THEYD</name>
<organism>
    <name type="scientific">Thermodesulfovibrio yellowstonii (strain ATCC 51303 / DSM 11347 / YP87)</name>
    <dbReference type="NCBI Taxonomy" id="289376"/>
    <lineage>
        <taxon>Bacteria</taxon>
        <taxon>Pseudomonadati</taxon>
        <taxon>Nitrospirota</taxon>
        <taxon>Thermodesulfovibrionia</taxon>
        <taxon>Thermodesulfovibrionales</taxon>
        <taxon>Thermodesulfovibrionaceae</taxon>
        <taxon>Thermodesulfovibrio</taxon>
    </lineage>
</organism>
<dbReference type="EC" id="4.2.1.33" evidence="1"/>
<dbReference type="EMBL" id="CP001147">
    <property type="protein sequence ID" value="ACI21034.1"/>
    <property type="molecule type" value="Genomic_DNA"/>
</dbReference>
<dbReference type="RefSeq" id="WP_012545762.1">
    <property type="nucleotide sequence ID" value="NC_011296.1"/>
</dbReference>
<dbReference type="RefSeq" id="YP_002248705.1">
    <property type="nucleotide sequence ID" value="NC_011296.1"/>
</dbReference>
<dbReference type="SMR" id="B5YKE0"/>
<dbReference type="FunCoup" id="B5YKE0">
    <property type="interactions" value="416"/>
</dbReference>
<dbReference type="STRING" id="289376.THEYE_A0867"/>
<dbReference type="EnsemblBacteria" id="ACI21034">
    <property type="protein sequence ID" value="ACI21034"/>
    <property type="gene ID" value="THEYE_A0867"/>
</dbReference>
<dbReference type="KEGG" id="tye:THEYE_A0867"/>
<dbReference type="PATRIC" id="fig|289376.4.peg.854"/>
<dbReference type="eggNOG" id="COG0065">
    <property type="taxonomic scope" value="Bacteria"/>
</dbReference>
<dbReference type="HOGENOM" id="CLU_006714_3_4_0"/>
<dbReference type="InParanoid" id="B5YKE0"/>
<dbReference type="OrthoDB" id="9802769at2"/>
<dbReference type="UniPathway" id="UPA00048">
    <property type="reaction ID" value="UER00071"/>
</dbReference>
<dbReference type="Proteomes" id="UP000000718">
    <property type="component" value="Chromosome"/>
</dbReference>
<dbReference type="GO" id="GO:0003861">
    <property type="term" value="F:3-isopropylmalate dehydratase activity"/>
    <property type="evidence" value="ECO:0007669"/>
    <property type="project" value="UniProtKB-UniRule"/>
</dbReference>
<dbReference type="GO" id="GO:0051539">
    <property type="term" value="F:4 iron, 4 sulfur cluster binding"/>
    <property type="evidence" value="ECO:0007669"/>
    <property type="project" value="UniProtKB-KW"/>
</dbReference>
<dbReference type="GO" id="GO:0046872">
    <property type="term" value="F:metal ion binding"/>
    <property type="evidence" value="ECO:0007669"/>
    <property type="project" value="UniProtKB-KW"/>
</dbReference>
<dbReference type="GO" id="GO:0009098">
    <property type="term" value="P:L-leucine biosynthetic process"/>
    <property type="evidence" value="ECO:0007669"/>
    <property type="project" value="UniProtKB-UniRule"/>
</dbReference>
<dbReference type="CDD" id="cd01583">
    <property type="entry name" value="IPMI"/>
    <property type="match status" value="1"/>
</dbReference>
<dbReference type="Gene3D" id="3.30.499.10">
    <property type="entry name" value="Aconitase, domain 3"/>
    <property type="match status" value="2"/>
</dbReference>
<dbReference type="HAMAP" id="MF_01027">
    <property type="entry name" value="LeuC_type2"/>
    <property type="match status" value="1"/>
</dbReference>
<dbReference type="InterPro" id="IPR015931">
    <property type="entry name" value="Acnase/IPM_dHydase_lsu_aba_1/3"/>
</dbReference>
<dbReference type="InterPro" id="IPR001030">
    <property type="entry name" value="Acoase/IPM_deHydtase_lsu_aba"/>
</dbReference>
<dbReference type="InterPro" id="IPR018136">
    <property type="entry name" value="Aconitase_4Fe-4S_BS"/>
</dbReference>
<dbReference type="InterPro" id="IPR036008">
    <property type="entry name" value="Aconitase_4Fe-4S_dom"/>
</dbReference>
<dbReference type="InterPro" id="IPR011826">
    <property type="entry name" value="HAcnase/IPMdehydase_lsu_prok"/>
</dbReference>
<dbReference type="InterPro" id="IPR006251">
    <property type="entry name" value="Homoacnase/IPMdehydase_lsu"/>
</dbReference>
<dbReference type="InterPro" id="IPR050067">
    <property type="entry name" value="IPM_dehydratase_rel_enz"/>
</dbReference>
<dbReference type="InterPro" id="IPR033941">
    <property type="entry name" value="IPMI_cat"/>
</dbReference>
<dbReference type="InterPro" id="IPR011823">
    <property type="entry name" value="IsopropMal_deHydtase_lsu_bac"/>
</dbReference>
<dbReference type="NCBIfam" id="TIGR01343">
    <property type="entry name" value="hacA_fam"/>
    <property type="match status" value="1"/>
</dbReference>
<dbReference type="NCBIfam" id="TIGR02086">
    <property type="entry name" value="IPMI_arch"/>
    <property type="match status" value="1"/>
</dbReference>
<dbReference type="NCBIfam" id="TIGR02083">
    <property type="entry name" value="LEU2"/>
    <property type="match status" value="1"/>
</dbReference>
<dbReference type="NCBIfam" id="NF001614">
    <property type="entry name" value="PRK00402.1"/>
    <property type="match status" value="1"/>
</dbReference>
<dbReference type="PANTHER" id="PTHR43822:SF16">
    <property type="entry name" value="3-ISOPROPYLMALATE DEHYDRATASE LARGE SUBUNIT 2"/>
    <property type="match status" value="1"/>
</dbReference>
<dbReference type="PANTHER" id="PTHR43822">
    <property type="entry name" value="HOMOACONITASE, MITOCHONDRIAL-RELATED"/>
    <property type="match status" value="1"/>
</dbReference>
<dbReference type="Pfam" id="PF00330">
    <property type="entry name" value="Aconitase"/>
    <property type="match status" value="2"/>
</dbReference>
<dbReference type="PRINTS" id="PR00415">
    <property type="entry name" value="ACONITASE"/>
</dbReference>
<dbReference type="SUPFAM" id="SSF53732">
    <property type="entry name" value="Aconitase iron-sulfur domain"/>
    <property type="match status" value="1"/>
</dbReference>
<dbReference type="PROSITE" id="PS00450">
    <property type="entry name" value="ACONITASE_1"/>
    <property type="match status" value="1"/>
</dbReference>
<proteinExistence type="inferred from homology"/>
<evidence type="ECO:0000255" key="1">
    <source>
        <dbReference type="HAMAP-Rule" id="MF_01027"/>
    </source>
</evidence>
<accession>B5YKE0</accession>
<comment type="function">
    <text evidence="1">Catalyzes the isomerization between 2-isopropylmalate and 3-isopropylmalate, via the formation of 2-isopropylmaleate.</text>
</comment>
<comment type="catalytic activity">
    <reaction evidence="1">
        <text>(2R,3S)-3-isopropylmalate = (2S)-2-isopropylmalate</text>
        <dbReference type="Rhea" id="RHEA:32287"/>
        <dbReference type="ChEBI" id="CHEBI:1178"/>
        <dbReference type="ChEBI" id="CHEBI:35121"/>
        <dbReference type="EC" id="4.2.1.33"/>
    </reaction>
</comment>
<comment type="cofactor">
    <cofactor evidence="1">
        <name>[4Fe-4S] cluster</name>
        <dbReference type="ChEBI" id="CHEBI:49883"/>
    </cofactor>
    <text evidence="1">Binds 1 [4Fe-4S] cluster per subunit.</text>
</comment>
<comment type="pathway">
    <text evidence="1">Amino-acid biosynthesis; L-leucine biosynthesis; L-leucine from 3-methyl-2-oxobutanoate: step 2/4.</text>
</comment>
<comment type="subunit">
    <text evidence="1">Heterodimer of LeuC and LeuD.</text>
</comment>
<comment type="similarity">
    <text evidence="1">Belongs to the aconitase/IPM isomerase family. LeuC type 2 subfamily.</text>
</comment>
<protein>
    <recommendedName>
        <fullName evidence="1">3-isopropylmalate dehydratase large subunit</fullName>
        <ecNumber evidence="1">4.2.1.33</ecNumber>
    </recommendedName>
    <alternativeName>
        <fullName evidence="1">Alpha-IPM isomerase</fullName>
        <shortName evidence="1">IPMI</shortName>
    </alternativeName>
    <alternativeName>
        <fullName evidence="1">Isopropylmalate isomerase</fullName>
    </alternativeName>
</protein>
<feature type="chain" id="PRO_1000135740" description="3-isopropylmalate dehydratase large subunit">
    <location>
        <begin position="1"/>
        <end position="421"/>
    </location>
</feature>
<feature type="binding site" evidence="1">
    <location>
        <position position="300"/>
    </location>
    <ligand>
        <name>[4Fe-4S] cluster</name>
        <dbReference type="ChEBI" id="CHEBI:49883"/>
    </ligand>
</feature>
<feature type="binding site" evidence="1">
    <location>
        <position position="360"/>
    </location>
    <ligand>
        <name>[4Fe-4S] cluster</name>
        <dbReference type="ChEBI" id="CHEBI:49883"/>
    </ligand>
</feature>
<feature type="binding site" evidence="1">
    <location>
        <position position="363"/>
    </location>
    <ligand>
        <name>[4Fe-4S] cluster</name>
        <dbReference type="ChEBI" id="CHEBI:49883"/>
    </ligand>
</feature>
<keyword id="KW-0004">4Fe-4S</keyword>
<keyword id="KW-0028">Amino-acid biosynthesis</keyword>
<keyword id="KW-0100">Branched-chain amino acid biosynthesis</keyword>
<keyword id="KW-0408">Iron</keyword>
<keyword id="KW-0411">Iron-sulfur</keyword>
<keyword id="KW-0432">Leucine biosynthesis</keyword>
<keyword id="KW-0456">Lyase</keyword>
<keyword id="KW-0479">Metal-binding</keyword>
<keyword id="KW-1185">Reference proteome</keyword>
<reference key="1">
    <citation type="submission" date="2008-08" db="EMBL/GenBank/DDBJ databases">
        <title>The complete genome sequence of Thermodesulfovibrio yellowstonii strain ATCC 51303 / DSM 11347 / YP87.</title>
        <authorList>
            <person name="Dodson R.J."/>
            <person name="Durkin A.S."/>
            <person name="Wu M."/>
            <person name="Eisen J."/>
            <person name="Sutton G."/>
        </authorList>
    </citation>
    <scope>NUCLEOTIDE SEQUENCE [LARGE SCALE GENOMIC DNA]</scope>
    <source>
        <strain>ATCC 51303 / DSM 11347 / YP87</strain>
    </source>
</reference>
<gene>
    <name evidence="1" type="primary">leuC</name>
    <name type="ordered locus">THEYE_A0867</name>
</gene>